<dbReference type="EC" id="4.2.1.10" evidence="1"/>
<dbReference type="EMBL" id="CP000887">
    <property type="protein sequence ID" value="ACD72387.1"/>
    <property type="molecule type" value="Genomic_DNA"/>
</dbReference>
<dbReference type="RefSeq" id="WP_002966789.1">
    <property type="nucleotide sequence ID" value="NC_010742.1"/>
</dbReference>
<dbReference type="SMR" id="B2S5E0"/>
<dbReference type="GeneID" id="93016716"/>
<dbReference type="KEGG" id="bmc:BAbS19_I08660"/>
<dbReference type="HOGENOM" id="CLU_090968_1_0_5"/>
<dbReference type="UniPathway" id="UPA00053">
    <property type="reaction ID" value="UER00086"/>
</dbReference>
<dbReference type="Proteomes" id="UP000002565">
    <property type="component" value="Chromosome 1"/>
</dbReference>
<dbReference type="GO" id="GO:0003855">
    <property type="term" value="F:3-dehydroquinate dehydratase activity"/>
    <property type="evidence" value="ECO:0007669"/>
    <property type="project" value="UniProtKB-UniRule"/>
</dbReference>
<dbReference type="GO" id="GO:0008652">
    <property type="term" value="P:amino acid biosynthetic process"/>
    <property type="evidence" value="ECO:0007669"/>
    <property type="project" value="UniProtKB-KW"/>
</dbReference>
<dbReference type="GO" id="GO:0009073">
    <property type="term" value="P:aromatic amino acid family biosynthetic process"/>
    <property type="evidence" value="ECO:0007669"/>
    <property type="project" value="UniProtKB-KW"/>
</dbReference>
<dbReference type="GO" id="GO:0009423">
    <property type="term" value="P:chorismate biosynthetic process"/>
    <property type="evidence" value="ECO:0007669"/>
    <property type="project" value="UniProtKB-UniRule"/>
</dbReference>
<dbReference type="GO" id="GO:0019631">
    <property type="term" value="P:quinate catabolic process"/>
    <property type="evidence" value="ECO:0007669"/>
    <property type="project" value="TreeGrafter"/>
</dbReference>
<dbReference type="CDD" id="cd00466">
    <property type="entry name" value="DHQase_II"/>
    <property type="match status" value="1"/>
</dbReference>
<dbReference type="Gene3D" id="3.40.50.9100">
    <property type="entry name" value="Dehydroquinase, class II"/>
    <property type="match status" value="1"/>
</dbReference>
<dbReference type="HAMAP" id="MF_00169">
    <property type="entry name" value="AroQ"/>
    <property type="match status" value="1"/>
</dbReference>
<dbReference type="InterPro" id="IPR001874">
    <property type="entry name" value="DHquinase_II"/>
</dbReference>
<dbReference type="InterPro" id="IPR018509">
    <property type="entry name" value="DHquinase_II_CS"/>
</dbReference>
<dbReference type="InterPro" id="IPR036441">
    <property type="entry name" value="DHquinase_II_sf"/>
</dbReference>
<dbReference type="NCBIfam" id="TIGR01088">
    <property type="entry name" value="aroQ"/>
    <property type="match status" value="1"/>
</dbReference>
<dbReference type="NCBIfam" id="NF003805">
    <property type="entry name" value="PRK05395.1-2"/>
    <property type="match status" value="1"/>
</dbReference>
<dbReference type="NCBIfam" id="NF003806">
    <property type="entry name" value="PRK05395.1-3"/>
    <property type="match status" value="1"/>
</dbReference>
<dbReference type="NCBIfam" id="NF003807">
    <property type="entry name" value="PRK05395.1-4"/>
    <property type="match status" value="1"/>
</dbReference>
<dbReference type="PANTHER" id="PTHR21272">
    <property type="entry name" value="CATABOLIC 3-DEHYDROQUINASE"/>
    <property type="match status" value="1"/>
</dbReference>
<dbReference type="PANTHER" id="PTHR21272:SF3">
    <property type="entry name" value="CATABOLIC 3-DEHYDROQUINASE"/>
    <property type="match status" value="1"/>
</dbReference>
<dbReference type="Pfam" id="PF01220">
    <property type="entry name" value="DHquinase_II"/>
    <property type="match status" value="1"/>
</dbReference>
<dbReference type="PIRSF" id="PIRSF001399">
    <property type="entry name" value="DHquinase_II"/>
    <property type="match status" value="1"/>
</dbReference>
<dbReference type="SUPFAM" id="SSF52304">
    <property type="entry name" value="Type II 3-dehydroquinate dehydratase"/>
    <property type="match status" value="1"/>
</dbReference>
<dbReference type="PROSITE" id="PS01029">
    <property type="entry name" value="DEHYDROQUINASE_II"/>
    <property type="match status" value="1"/>
</dbReference>
<gene>
    <name evidence="1" type="primary">aroQ</name>
    <name type="ordered locus">BAbS19_I08660</name>
</gene>
<organism>
    <name type="scientific">Brucella abortus (strain S19)</name>
    <dbReference type="NCBI Taxonomy" id="430066"/>
    <lineage>
        <taxon>Bacteria</taxon>
        <taxon>Pseudomonadati</taxon>
        <taxon>Pseudomonadota</taxon>
        <taxon>Alphaproteobacteria</taxon>
        <taxon>Hyphomicrobiales</taxon>
        <taxon>Brucellaceae</taxon>
        <taxon>Brucella/Ochrobactrum group</taxon>
        <taxon>Brucella</taxon>
    </lineage>
</organism>
<evidence type="ECO:0000255" key="1">
    <source>
        <dbReference type="HAMAP-Rule" id="MF_00169"/>
    </source>
</evidence>
<feature type="chain" id="PRO_1000097594" description="3-dehydroquinate dehydratase">
    <location>
        <begin position="1"/>
        <end position="157"/>
    </location>
</feature>
<feature type="active site" description="Proton acceptor" evidence="1">
    <location>
        <position position="24"/>
    </location>
</feature>
<feature type="active site" description="Proton donor" evidence="1">
    <location>
        <position position="101"/>
    </location>
</feature>
<feature type="binding site" evidence="1">
    <location>
        <position position="75"/>
    </location>
    <ligand>
        <name>substrate</name>
    </ligand>
</feature>
<feature type="binding site" evidence="1">
    <location>
        <position position="81"/>
    </location>
    <ligand>
        <name>substrate</name>
    </ligand>
</feature>
<feature type="binding site" evidence="1">
    <location>
        <position position="88"/>
    </location>
    <ligand>
        <name>substrate</name>
    </ligand>
</feature>
<feature type="binding site" evidence="1">
    <location>
        <begin position="102"/>
        <end position="103"/>
    </location>
    <ligand>
        <name>substrate</name>
    </ligand>
</feature>
<feature type="binding site" evidence="1">
    <location>
        <position position="112"/>
    </location>
    <ligand>
        <name>substrate</name>
    </ligand>
</feature>
<feature type="site" description="Transition state stabilizer" evidence="1">
    <location>
        <position position="19"/>
    </location>
</feature>
<sequence>MTKTVFVLNGPNLNLLGKREPGIYGVATLDDIEASCKREAGQLELQIDFRQSNHEGDLVSWIQEAGEKNAYVLINPAAYSHTSVAIHDAIRSARVTVVEVHLSNIHAREAFRHHSHVSAVAKGVICGFGAEGYLLGLRALAAIAKEEEKNGQSIKGA</sequence>
<protein>
    <recommendedName>
        <fullName evidence="1">3-dehydroquinate dehydratase</fullName>
        <shortName evidence="1">3-dehydroquinase</shortName>
        <ecNumber evidence="1">4.2.1.10</ecNumber>
    </recommendedName>
    <alternativeName>
        <fullName evidence="1">Type II DHQase</fullName>
    </alternativeName>
</protein>
<comment type="function">
    <text evidence="1">Catalyzes a trans-dehydration via an enolate intermediate.</text>
</comment>
<comment type="catalytic activity">
    <reaction evidence="1">
        <text>3-dehydroquinate = 3-dehydroshikimate + H2O</text>
        <dbReference type="Rhea" id="RHEA:21096"/>
        <dbReference type="ChEBI" id="CHEBI:15377"/>
        <dbReference type="ChEBI" id="CHEBI:16630"/>
        <dbReference type="ChEBI" id="CHEBI:32364"/>
        <dbReference type="EC" id="4.2.1.10"/>
    </reaction>
</comment>
<comment type="pathway">
    <text evidence="1">Metabolic intermediate biosynthesis; chorismate biosynthesis; chorismate from D-erythrose 4-phosphate and phosphoenolpyruvate: step 3/7.</text>
</comment>
<comment type="subunit">
    <text evidence="1">Homododecamer.</text>
</comment>
<comment type="similarity">
    <text evidence="1">Belongs to the type-II 3-dehydroquinase family.</text>
</comment>
<reference key="1">
    <citation type="journal article" date="2008" name="PLoS ONE">
        <title>Genome sequence of Brucella abortus vaccine strain S19 compared to virulent strains yields candidate virulence genes.</title>
        <authorList>
            <person name="Crasta O.R."/>
            <person name="Folkerts O."/>
            <person name="Fei Z."/>
            <person name="Mane S.P."/>
            <person name="Evans C."/>
            <person name="Martino-Catt S."/>
            <person name="Bricker B."/>
            <person name="Yu G."/>
            <person name="Du L."/>
            <person name="Sobral B.W."/>
        </authorList>
    </citation>
    <scope>NUCLEOTIDE SEQUENCE [LARGE SCALE GENOMIC DNA]</scope>
    <source>
        <strain>S19</strain>
    </source>
</reference>
<name>AROQ_BRUA1</name>
<accession>B2S5E0</accession>
<proteinExistence type="inferred from homology"/>
<keyword id="KW-0028">Amino-acid biosynthesis</keyword>
<keyword id="KW-0057">Aromatic amino acid biosynthesis</keyword>
<keyword id="KW-0456">Lyase</keyword>